<dbReference type="EMBL" id="CR954253">
    <property type="protein sequence ID" value="CAI97542.1"/>
    <property type="molecule type" value="Genomic_DNA"/>
</dbReference>
<dbReference type="RefSeq" id="WP_011543763.1">
    <property type="nucleotide sequence ID" value="NC_008054.1"/>
</dbReference>
<dbReference type="STRING" id="390333.Ldb0715"/>
<dbReference type="KEGG" id="ldb:Ldb0715"/>
<dbReference type="PATRIC" id="fig|390333.7.peg.660"/>
<dbReference type="eggNOG" id="COG0759">
    <property type="taxonomic scope" value="Bacteria"/>
</dbReference>
<dbReference type="HOGENOM" id="CLU_144811_2_2_9"/>
<dbReference type="BioCyc" id="LDEL390333:LDB_RS03115-MONOMER"/>
<dbReference type="Proteomes" id="UP000001259">
    <property type="component" value="Chromosome"/>
</dbReference>
<dbReference type="GO" id="GO:0005886">
    <property type="term" value="C:plasma membrane"/>
    <property type="evidence" value="ECO:0007669"/>
    <property type="project" value="UniProtKB-SubCell"/>
</dbReference>
<dbReference type="HAMAP" id="MF_00386">
    <property type="entry name" value="UPF0161_YidD"/>
    <property type="match status" value="1"/>
</dbReference>
<dbReference type="InterPro" id="IPR002696">
    <property type="entry name" value="Membr_insert_effic_factor_YidD"/>
</dbReference>
<dbReference type="NCBIfam" id="TIGR00278">
    <property type="entry name" value="membrane protein insertion efficiency factor YidD"/>
    <property type="match status" value="1"/>
</dbReference>
<dbReference type="PANTHER" id="PTHR33383">
    <property type="entry name" value="MEMBRANE PROTEIN INSERTION EFFICIENCY FACTOR-RELATED"/>
    <property type="match status" value="1"/>
</dbReference>
<dbReference type="PANTHER" id="PTHR33383:SF1">
    <property type="entry name" value="MEMBRANE PROTEIN INSERTION EFFICIENCY FACTOR-RELATED"/>
    <property type="match status" value="1"/>
</dbReference>
<dbReference type="Pfam" id="PF01809">
    <property type="entry name" value="YidD"/>
    <property type="match status" value="1"/>
</dbReference>
<dbReference type="SMART" id="SM01234">
    <property type="entry name" value="Haemolytic"/>
    <property type="match status" value="1"/>
</dbReference>
<feature type="chain" id="PRO_0000253116" description="Putative membrane protein insertion efficiency factor">
    <location>
        <begin position="1"/>
        <end position="95"/>
    </location>
</feature>
<comment type="function">
    <text evidence="1">Could be involved in insertion of integral membrane proteins into the membrane.</text>
</comment>
<comment type="subcellular location">
    <subcellularLocation>
        <location evidence="1">Cell membrane</location>
        <topology evidence="1">Peripheral membrane protein</topology>
        <orientation evidence="1">Cytoplasmic side</orientation>
    </subcellularLocation>
</comment>
<comment type="similarity">
    <text evidence="1">Belongs to the UPF0161 family.</text>
</comment>
<gene>
    <name type="ordered locus">Ldb0715</name>
</gene>
<protein>
    <recommendedName>
        <fullName evidence="1">Putative membrane protein insertion efficiency factor</fullName>
    </recommendedName>
</protein>
<sequence length="95" mass="10965">MRQIMILLVRFYQRAISPILPDSCCFYPTCSSYMITALEKQGPLLGLLMGLARILRCNPFNRGGVDPVPDKFTLLRNPHPEEYEDEIIARKFHSH</sequence>
<proteinExistence type="inferred from homology"/>
<organism>
    <name type="scientific">Lactobacillus delbrueckii subsp. bulgaricus (strain ATCC 11842 / DSM 20081 / BCRC 10696 / JCM 1002 / NBRC 13953 / NCIMB 11778 / NCTC 12712 / WDCM 00102 / Lb 14)</name>
    <dbReference type="NCBI Taxonomy" id="390333"/>
    <lineage>
        <taxon>Bacteria</taxon>
        <taxon>Bacillati</taxon>
        <taxon>Bacillota</taxon>
        <taxon>Bacilli</taxon>
        <taxon>Lactobacillales</taxon>
        <taxon>Lactobacillaceae</taxon>
        <taxon>Lactobacillus</taxon>
    </lineage>
</organism>
<reference key="1">
    <citation type="journal article" date="2006" name="Proc. Natl. Acad. Sci. U.S.A.">
        <title>The complete genome sequence of Lactobacillus bulgaricus reveals extensive and ongoing reductive evolution.</title>
        <authorList>
            <person name="van de Guchte M."/>
            <person name="Penaud S."/>
            <person name="Grimaldi C."/>
            <person name="Barbe V."/>
            <person name="Bryson K."/>
            <person name="Nicolas P."/>
            <person name="Robert C."/>
            <person name="Oztas S."/>
            <person name="Mangenot S."/>
            <person name="Couloux A."/>
            <person name="Loux V."/>
            <person name="Dervyn R."/>
            <person name="Bossy R."/>
            <person name="Bolotin A."/>
            <person name="Batto J.-M."/>
            <person name="Walunas T."/>
            <person name="Gibrat J.-F."/>
            <person name="Bessieres P."/>
            <person name="Weissenbach J."/>
            <person name="Ehrlich S.D."/>
            <person name="Maguin E."/>
        </authorList>
    </citation>
    <scope>NUCLEOTIDE SEQUENCE [LARGE SCALE GENOMIC DNA]</scope>
    <source>
        <strain>ATCC 11842 / DSM 20081 / BCRC 10696 / JCM 1002 / NBRC 13953 / NCIMB 11778 / NCTC 12712 / WDCM 00102 / Lb 14</strain>
    </source>
</reference>
<name>YIDD_LACDA</name>
<evidence type="ECO:0000255" key="1">
    <source>
        <dbReference type="HAMAP-Rule" id="MF_00386"/>
    </source>
</evidence>
<keyword id="KW-1003">Cell membrane</keyword>
<keyword id="KW-0472">Membrane</keyword>
<keyword id="KW-1185">Reference proteome</keyword>
<accession>Q1GAW1</accession>